<keyword id="KW-1185">Reference proteome</keyword>
<keyword id="KW-0687">Ribonucleoprotein</keyword>
<keyword id="KW-0689">Ribosomal protein</keyword>
<name>RS21_ZYMMO</name>
<evidence type="ECO:0000255" key="1">
    <source>
        <dbReference type="HAMAP-Rule" id="MF_00358"/>
    </source>
</evidence>
<evidence type="ECO:0000256" key="2">
    <source>
        <dbReference type="SAM" id="MobiDB-lite"/>
    </source>
</evidence>
<evidence type="ECO:0000305" key="3"/>
<organism>
    <name type="scientific">Zymomonas mobilis subsp. mobilis (strain ATCC 31821 / ZM4 / CP4)</name>
    <dbReference type="NCBI Taxonomy" id="264203"/>
    <lineage>
        <taxon>Bacteria</taxon>
        <taxon>Pseudomonadati</taxon>
        <taxon>Pseudomonadota</taxon>
        <taxon>Alphaproteobacteria</taxon>
        <taxon>Sphingomonadales</taxon>
        <taxon>Zymomonadaceae</taxon>
        <taxon>Zymomonas</taxon>
    </lineage>
</organism>
<feature type="chain" id="PRO_0000178411" description="Small ribosomal subunit protein bS21">
    <location>
        <begin position="1"/>
        <end position="68"/>
    </location>
</feature>
<feature type="region of interest" description="Disordered" evidence="2">
    <location>
        <begin position="36"/>
        <end position="68"/>
    </location>
</feature>
<feature type="compositionally biased region" description="Basic and acidic residues" evidence="2">
    <location>
        <begin position="37"/>
        <end position="49"/>
    </location>
</feature>
<feature type="compositionally biased region" description="Basic residues" evidence="2">
    <location>
        <begin position="50"/>
        <end position="59"/>
    </location>
</feature>
<comment type="similarity">
    <text evidence="1">Belongs to the bacterial ribosomal protein bS21 family.</text>
</comment>
<reference key="1">
    <citation type="journal article" date="2005" name="Nat. Biotechnol.">
        <title>The genome sequence of the ethanologenic bacterium Zymomonas mobilis ZM4.</title>
        <authorList>
            <person name="Seo J.-S."/>
            <person name="Chong H."/>
            <person name="Park H.S."/>
            <person name="Yoon K.-O."/>
            <person name="Jung C."/>
            <person name="Kim J.J."/>
            <person name="Hong J.H."/>
            <person name="Kim H."/>
            <person name="Kim J.-H."/>
            <person name="Kil J.-I."/>
            <person name="Park C.J."/>
            <person name="Oh H.-M."/>
            <person name="Lee J.-S."/>
            <person name="Jin S.-J."/>
            <person name="Um H.-W."/>
            <person name="Lee H.-J."/>
            <person name="Oh S.-J."/>
            <person name="Kim J.Y."/>
            <person name="Kang H.L."/>
            <person name="Lee S.Y."/>
            <person name="Lee K.J."/>
            <person name="Kang H.S."/>
        </authorList>
    </citation>
    <scope>NUCLEOTIDE SEQUENCE [LARGE SCALE GENOMIC DNA]</scope>
    <source>
        <strain>ATCC 31821 / ZM4 / CP4</strain>
    </source>
</reference>
<sequence>MQIIVRDNNVDQALRALKKKLQREGVYREMKLRRHYEKPSEKRARERAAAVRRSRKLERKRAERDGIR</sequence>
<dbReference type="EMBL" id="AE008692">
    <property type="protein sequence ID" value="AAV90337.1"/>
    <property type="molecule type" value="Genomic_DNA"/>
</dbReference>
<dbReference type="RefSeq" id="WP_011241460.1">
    <property type="nucleotide sequence ID" value="NZ_CP035711.1"/>
</dbReference>
<dbReference type="SMR" id="Q5NLS3"/>
<dbReference type="STRING" id="264203.ZMO1713"/>
<dbReference type="GeneID" id="79904960"/>
<dbReference type="KEGG" id="zmo:ZMO1713"/>
<dbReference type="eggNOG" id="COG0828">
    <property type="taxonomic scope" value="Bacteria"/>
</dbReference>
<dbReference type="HOGENOM" id="CLU_159258_0_1_5"/>
<dbReference type="Proteomes" id="UP000001173">
    <property type="component" value="Chromosome"/>
</dbReference>
<dbReference type="GO" id="GO:1990904">
    <property type="term" value="C:ribonucleoprotein complex"/>
    <property type="evidence" value="ECO:0007669"/>
    <property type="project" value="UniProtKB-KW"/>
</dbReference>
<dbReference type="GO" id="GO:0005840">
    <property type="term" value="C:ribosome"/>
    <property type="evidence" value="ECO:0007669"/>
    <property type="project" value="UniProtKB-KW"/>
</dbReference>
<dbReference type="GO" id="GO:0003735">
    <property type="term" value="F:structural constituent of ribosome"/>
    <property type="evidence" value="ECO:0007669"/>
    <property type="project" value="InterPro"/>
</dbReference>
<dbReference type="GO" id="GO:0006412">
    <property type="term" value="P:translation"/>
    <property type="evidence" value="ECO:0007669"/>
    <property type="project" value="UniProtKB-UniRule"/>
</dbReference>
<dbReference type="Gene3D" id="1.20.5.1150">
    <property type="entry name" value="Ribosomal protein S8"/>
    <property type="match status" value="1"/>
</dbReference>
<dbReference type="HAMAP" id="MF_00358">
    <property type="entry name" value="Ribosomal_bS21"/>
    <property type="match status" value="1"/>
</dbReference>
<dbReference type="InterPro" id="IPR001911">
    <property type="entry name" value="Ribosomal_bS21"/>
</dbReference>
<dbReference type="InterPro" id="IPR018278">
    <property type="entry name" value="Ribosomal_bS21_CS"/>
</dbReference>
<dbReference type="InterPro" id="IPR038380">
    <property type="entry name" value="Ribosomal_bS21_sf"/>
</dbReference>
<dbReference type="NCBIfam" id="TIGR00030">
    <property type="entry name" value="S21p"/>
    <property type="match status" value="1"/>
</dbReference>
<dbReference type="PANTHER" id="PTHR21109">
    <property type="entry name" value="MITOCHONDRIAL 28S RIBOSOMAL PROTEIN S21"/>
    <property type="match status" value="1"/>
</dbReference>
<dbReference type="PANTHER" id="PTHR21109:SF0">
    <property type="entry name" value="SMALL RIBOSOMAL SUBUNIT PROTEIN BS21M"/>
    <property type="match status" value="1"/>
</dbReference>
<dbReference type="Pfam" id="PF01165">
    <property type="entry name" value="Ribosomal_S21"/>
    <property type="match status" value="1"/>
</dbReference>
<dbReference type="PRINTS" id="PR00976">
    <property type="entry name" value="RIBOSOMALS21"/>
</dbReference>
<dbReference type="PROSITE" id="PS01181">
    <property type="entry name" value="RIBOSOMAL_S21"/>
    <property type="match status" value="1"/>
</dbReference>
<protein>
    <recommendedName>
        <fullName evidence="1">Small ribosomal subunit protein bS21</fullName>
    </recommendedName>
    <alternativeName>
        <fullName evidence="3">30S ribosomal protein S21</fullName>
    </alternativeName>
</protein>
<accession>Q5NLS3</accession>
<gene>
    <name evidence="1" type="primary">rpsU</name>
    <name type="ordered locus">ZMO1713</name>
</gene>
<proteinExistence type="inferred from homology"/>